<accession>C0QQC5</accession>
<evidence type="ECO:0000255" key="1">
    <source>
        <dbReference type="HAMAP-Rule" id="MF_00384"/>
    </source>
</evidence>
<organism>
    <name type="scientific">Persephonella marina (strain DSM 14350 / EX-H1)</name>
    <dbReference type="NCBI Taxonomy" id="123214"/>
    <lineage>
        <taxon>Bacteria</taxon>
        <taxon>Pseudomonadati</taxon>
        <taxon>Aquificota</taxon>
        <taxon>Aquificia</taxon>
        <taxon>Aquificales</taxon>
        <taxon>Hydrogenothermaceae</taxon>
        <taxon>Persephonella</taxon>
    </lineage>
</organism>
<keyword id="KW-0028">Amino-acid biosynthesis</keyword>
<keyword id="KW-0067">ATP-binding</keyword>
<keyword id="KW-0963">Cytoplasm</keyword>
<keyword id="KW-0418">Kinase</keyword>
<keyword id="KW-0547">Nucleotide-binding</keyword>
<keyword id="KW-1185">Reference proteome</keyword>
<keyword id="KW-0791">Threonine biosynthesis</keyword>
<keyword id="KW-0808">Transferase</keyword>
<proteinExistence type="inferred from homology"/>
<name>KHSE_PERMH</name>
<dbReference type="EC" id="2.7.1.39" evidence="1"/>
<dbReference type="EMBL" id="CP001230">
    <property type="protein sequence ID" value="ACO03812.1"/>
    <property type="molecule type" value="Genomic_DNA"/>
</dbReference>
<dbReference type="RefSeq" id="WP_012676051.1">
    <property type="nucleotide sequence ID" value="NC_012440.1"/>
</dbReference>
<dbReference type="SMR" id="C0QQC5"/>
<dbReference type="STRING" id="123214.PERMA_1085"/>
<dbReference type="PaxDb" id="123214-PERMA_1085"/>
<dbReference type="KEGG" id="pmx:PERMA_1085"/>
<dbReference type="eggNOG" id="COG0083">
    <property type="taxonomic scope" value="Bacteria"/>
</dbReference>
<dbReference type="HOGENOM" id="CLU_041243_0_2_0"/>
<dbReference type="OrthoDB" id="9769912at2"/>
<dbReference type="UniPathway" id="UPA00050">
    <property type="reaction ID" value="UER00064"/>
</dbReference>
<dbReference type="Proteomes" id="UP000001366">
    <property type="component" value="Chromosome"/>
</dbReference>
<dbReference type="GO" id="GO:0005737">
    <property type="term" value="C:cytoplasm"/>
    <property type="evidence" value="ECO:0007669"/>
    <property type="project" value="UniProtKB-SubCell"/>
</dbReference>
<dbReference type="GO" id="GO:0005524">
    <property type="term" value="F:ATP binding"/>
    <property type="evidence" value="ECO:0007669"/>
    <property type="project" value="UniProtKB-UniRule"/>
</dbReference>
<dbReference type="GO" id="GO:0004413">
    <property type="term" value="F:homoserine kinase activity"/>
    <property type="evidence" value="ECO:0007669"/>
    <property type="project" value="UniProtKB-UniRule"/>
</dbReference>
<dbReference type="GO" id="GO:0009088">
    <property type="term" value="P:threonine biosynthetic process"/>
    <property type="evidence" value="ECO:0007669"/>
    <property type="project" value="UniProtKB-UniRule"/>
</dbReference>
<dbReference type="Gene3D" id="3.30.230.10">
    <property type="match status" value="1"/>
</dbReference>
<dbReference type="Gene3D" id="3.30.70.890">
    <property type="entry name" value="GHMP kinase, C-terminal domain"/>
    <property type="match status" value="1"/>
</dbReference>
<dbReference type="HAMAP" id="MF_00384">
    <property type="entry name" value="Homoser_kinase"/>
    <property type="match status" value="1"/>
</dbReference>
<dbReference type="InterPro" id="IPR013750">
    <property type="entry name" value="GHMP_kinase_C_dom"/>
</dbReference>
<dbReference type="InterPro" id="IPR036554">
    <property type="entry name" value="GHMP_kinase_C_sf"/>
</dbReference>
<dbReference type="InterPro" id="IPR006204">
    <property type="entry name" value="GHMP_kinase_N_dom"/>
</dbReference>
<dbReference type="InterPro" id="IPR006203">
    <property type="entry name" value="GHMP_knse_ATP-bd_CS"/>
</dbReference>
<dbReference type="InterPro" id="IPR000870">
    <property type="entry name" value="Homoserine_kinase"/>
</dbReference>
<dbReference type="InterPro" id="IPR020568">
    <property type="entry name" value="Ribosomal_Su5_D2-typ_SF"/>
</dbReference>
<dbReference type="InterPro" id="IPR014721">
    <property type="entry name" value="Ribsml_uS5_D2-typ_fold_subgr"/>
</dbReference>
<dbReference type="NCBIfam" id="TIGR00191">
    <property type="entry name" value="thrB"/>
    <property type="match status" value="1"/>
</dbReference>
<dbReference type="PANTHER" id="PTHR20861:SF1">
    <property type="entry name" value="HOMOSERINE KINASE"/>
    <property type="match status" value="1"/>
</dbReference>
<dbReference type="PANTHER" id="PTHR20861">
    <property type="entry name" value="HOMOSERINE/4-DIPHOSPHOCYTIDYL-2-C-METHYL-D-ERYTHRITOL KINASE"/>
    <property type="match status" value="1"/>
</dbReference>
<dbReference type="Pfam" id="PF08544">
    <property type="entry name" value="GHMP_kinases_C"/>
    <property type="match status" value="1"/>
</dbReference>
<dbReference type="Pfam" id="PF00288">
    <property type="entry name" value="GHMP_kinases_N"/>
    <property type="match status" value="1"/>
</dbReference>
<dbReference type="PIRSF" id="PIRSF000676">
    <property type="entry name" value="Homoser_kin"/>
    <property type="match status" value="1"/>
</dbReference>
<dbReference type="PRINTS" id="PR00958">
    <property type="entry name" value="HOMSERKINASE"/>
</dbReference>
<dbReference type="SUPFAM" id="SSF55060">
    <property type="entry name" value="GHMP Kinase, C-terminal domain"/>
    <property type="match status" value="1"/>
</dbReference>
<dbReference type="SUPFAM" id="SSF54211">
    <property type="entry name" value="Ribosomal protein S5 domain 2-like"/>
    <property type="match status" value="1"/>
</dbReference>
<dbReference type="PROSITE" id="PS00627">
    <property type="entry name" value="GHMP_KINASES_ATP"/>
    <property type="match status" value="1"/>
</dbReference>
<reference key="1">
    <citation type="journal article" date="2009" name="J. Bacteriol.">
        <title>Complete and draft genome sequences of six members of the Aquificales.</title>
        <authorList>
            <person name="Reysenbach A.-L."/>
            <person name="Hamamura N."/>
            <person name="Podar M."/>
            <person name="Griffiths E."/>
            <person name="Ferreira S."/>
            <person name="Hochstein R."/>
            <person name="Heidelberg J."/>
            <person name="Johnson J."/>
            <person name="Mead D."/>
            <person name="Pohorille A."/>
            <person name="Sarmiento M."/>
            <person name="Schweighofer K."/>
            <person name="Seshadri R."/>
            <person name="Voytek M.A."/>
        </authorList>
    </citation>
    <scope>NUCLEOTIDE SEQUENCE [LARGE SCALE GENOMIC DNA]</scope>
    <source>
        <strain>DSM 14350 / EX-H1</strain>
    </source>
</reference>
<sequence length="300" mass="33452">MKVLKVKVPATTANLGAGFDTLGLALTLYNEFIVEEHDGVVIETEPKNEFLEIPENNLFIQVIKYACERRGKTFHGAKLKQINRVPVARGLGSSATAIVGAIVVSSAVSKTELTDDIFFDIAYRFEPHPDNLIPAWKGGFITALKDREKTYYNSIDFPEDIKAVVVIPEFELSTEKARSVLPERIPLRDGIFNVQRVSLFLSALQNRRYDLLRVAMEDRFHQPYRKKLIPNFDRVVQNGYDAGALGVSLSGAGSAILALADRNFEEIGKAMTEGFSEAGIRSEYKILDIDREGANLEILE</sequence>
<protein>
    <recommendedName>
        <fullName evidence="1">Homoserine kinase</fullName>
        <shortName evidence="1">HK</shortName>
        <shortName evidence="1">HSK</shortName>
        <ecNumber evidence="1">2.7.1.39</ecNumber>
    </recommendedName>
</protein>
<gene>
    <name evidence="1" type="primary">thrB</name>
    <name type="ordered locus">PERMA_1085</name>
</gene>
<comment type="function">
    <text evidence="1">Catalyzes the ATP-dependent phosphorylation of L-homoserine to L-homoserine phosphate.</text>
</comment>
<comment type="catalytic activity">
    <reaction evidence="1">
        <text>L-homoserine + ATP = O-phospho-L-homoserine + ADP + H(+)</text>
        <dbReference type="Rhea" id="RHEA:13985"/>
        <dbReference type="ChEBI" id="CHEBI:15378"/>
        <dbReference type="ChEBI" id="CHEBI:30616"/>
        <dbReference type="ChEBI" id="CHEBI:57476"/>
        <dbReference type="ChEBI" id="CHEBI:57590"/>
        <dbReference type="ChEBI" id="CHEBI:456216"/>
        <dbReference type="EC" id="2.7.1.39"/>
    </reaction>
</comment>
<comment type="pathway">
    <text evidence="1">Amino-acid biosynthesis; L-threonine biosynthesis; L-threonine from L-aspartate: step 4/5.</text>
</comment>
<comment type="subcellular location">
    <subcellularLocation>
        <location evidence="1">Cytoplasm</location>
    </subcellularLocation>
</comment>
<comment type="similarity">
    <text evidence="1">Belongs to the GHMP kinase family. Homoserine kinase subfamily.</text>
</comment>
<feature type="chain" id="PRO_1000205738" description="Homoserine kinase">
    <location>
        <begin position="1"/>
        <end position="300"/>
    </location>
</feature>
<feature type="binding site" evidence="1">
    <location>
        <begin position="86"/>
        <end position="96"/>
    </location>
    <ligand>
        <name>ATP</name>
        <dbReference type="ChEBI" id="CHEBI:30616"/>
    </ligand>
</feature>